<evidence type="ECO:0000250" key="1"/>
<evidence type="ECO:0000255" key="2">
    <source>
        <dbReference type="PROSITE-ProRule" id="PRU00274"/>
    </source>
</evidence>
<evidence type="ECO:0000256" key="3">
    <source>
        <dbReference type="SAM" id="MobiDB-lite"/>
    </source>
</evidence>
<evidence type="ECO:0000269" key="4">
    <source>
    </source>
</evidence>
<evidence type="ECO:0000269" key="5">
    <source>
    </source>
</evidence>
<evidence type="ECO:0000305" key="6"/>
<proteinExistence type="evidence at protein level"/>
<dbReference type="EC" id="3.4.21.10"/>
<dbReference type="EMBL" id="Y00970">
    <property type="protein sequence ID" value="CAA68784.1"/>
    <property type="molecule type" value="mRNA"/>
</dbReference>
<dbReference type="EMBL" id="X54017">
    <property type="protein sequence ID" value="CAA37964.1"/>
    <property type="molecule type" value="Genomic_DNA"/>
</dbReference>
<dbReference type="EMBL" id="X54018">
    <property type="protein sequence ID" value="CAA37964.1"/>
    <property type="status" value="JOINED"/>
    <property type="molecule type" value="Genomic_DNA"/>
</dbReference>
<dbReference type="EMBL" id="X54019">
    <property type="protein sequence ID" value="CAA37964.1"/>
    <property type="status" value="JOINED"/>
    <property type="molecule type" value="Genomic_DNA"/>
</dbReference>
<dbReference type="EMBL" id="X54020">
    <property type="protein sequence ID" value="CAA37964.1"/>
    <property type="status" value="JOINED"/>
    <property type="molecule type" value="Genomic_DNA"/>
</dbReference>
<dbReference type="EMBL" id="M77378">
    <property type="protein sequence ID" value="AAA51572.1"/>
    <property type="molecule type" value="Genomic_DNA"/>
</dbReference>
<dbReference type="EMBL" id="M77379">
    <property type="protein sequence ID" value="AAA51573.1"/>
    <property type="molecule type" value="Genomic_DNA"/>
</dbReference>
<dbReference type="EMBL" id="M77380">
    <property type="protein sequence ID" value="AAA51574.1"/>
    <property type="molecule type" value="Genomic_DNA"/>
</dbReference>
<dbReference type="EMBL" id="M77381">
    <property type="protein sequence ID" value="AAA51575.1"/>
    <property type="molecule type" value="Genomic_DNA"/>
</dbReference>
<dbReference type="EMBL" id="X66188">
    <property type="protein sequence ID" value="CAA46956.1"/>
    <property type="molecule type" value="Genomic_DNA"/>
</dbReference>
<dbReference type="EMBL" id="X54018">
    <property type="protein sequence ID" value="CAA46956.1"/>
    <property type="status" value="JOINED"/>
    <property type="molecule type" value="Genomic_DNA"/>
</dbReference>
<dbReference type="EMBL" id="X54019">
    <property type="protein sequence ID" value="CAA46956.1"/>
    <property type="status" value="JOINED"/>
    <property type="molecule type" value="Genomic_DNA"/>
</dbReference>
<dbReference type="EMBL" id="X54020">
    <property type="protein sequence ID" value="CAA46956.1"/>
    <property type="status" value="JOINED"/>
    <property type="molecule type" value="Genomic_DNA"/>
</dbReference>
<dbReference type="EMBL" id="CR456366">
    <property type="protein sequence ID" value="CAG30252.1"/>
    <property type="molecule type" value="mRNA"/>
</dbReference>
<dbReference type="CCDS" id="CCDS14101.1"/>
<dbReference type="PIR" id="S11674">
    <property type="entry name" value="S11674"/>
</dbReference>
<dbReference type="RefSeq" id="NP_001088.2">
    <property type="nucleotide sequence ID" value="NM_001097.3"/>
</dbReference>
<dbReference type="SMR" id="P10323"/>
<dbReference type="BioGRID" id="106565">
    <property type="interactions" value="6"/>
</dbReference>
<dbReference type="FunCoup" id="P10323">
    <property type="interactions" value="103"/>
</dbReference>
<dbReference type="IntAct" id="P10323">
    <property type="interactions" value="5"/>
</dbReference>
<dbReference type="STRING" id="9606.ENSP00000216139"/>
<dbReference type="BindingDB" id="P10323"/>
<dbReference type="ChEMBL" id="CHEMBL2738"/>
<dbReference type="GuidetoPHARMACOLOGY" id="2327"/>
<dbReference type="MEROPS" id="S01.223"/>
<dbReference type="GlyCosmos" id="P10323">
    <property type="glycosylation" value="2 sites, No reported glycans"/>
</dbReference>
<dbReference type="GlyGen" id="P10323">
    <property type="glycosylation" value="4 sites, 1 O-linked glycan (1 site)"/>
</dbReference>
<dbReference type="BioMuta" id="ACR"/>
<dbReference type="DMDM" id="115502349"/>
<dbReference type="jPOST" id="P10323"/>
<dbReference type="MassIVE" id="P10323"/>
<dbReference type="PaxDb" id="9606-ENSP00000216139"/>
<dbReference type="PeptideAtlas" id="P10323"/>
<dbReference type="ProteomicsDB" id="52600"/>
<dbReference type="Antibodypedia" id="53952">
    <property type="antibodies" value="196 antibodies from 27 providers"/>
</dbReference>
<dbReference type="DNASU" id="49"/>
<dbReference type="Ensembl" id="ENST00000216139.10">
    <property type="protein sequence ID" value="ENSP00000216139.5"/>
    <property type="gene ID" value="ENSG00000100312.11"/>
</dbReference>
<dbReference type="Ensembl" id="ENST00000707314.1">
    <property type="protein sequence ID" value="ENSP00000516837.1"/>
    <property type="gene ID" value="ENSG00000291368.1"/>
</dbReference>
<dbReference type="GeneID" id="49"/>
<dbReference type="KEGG" id="hsa:49"/>
<dbReference type="MANE-Select" id="ENST00000216139.10">
    <property type="protein sequence ID" value="ENSP00000216139.5"/>
    <property type="RefSeq nucleotide sequence ID" value="NM_001097.3"/>
    <property type="RefSeq protein sequence ID" value="NP_001088.2"/>
</dbReference>
<dbReference type="UCSC" id="uc003bnh.5">
    <property type="organism name" value="human"/>
</dbReference>
<dbReference type="AGR" id="HGNC:126"/>
<dbReference type="CTD" id="49"/>
<dbReference type="DisGeNET" id="49"/>
<dbReference type="GeneCards" id="ACR"/>
<dbReference type="HGNC" id="HGNC:126">
    <property type="gene designation" value="ACR"/>
</dbReference>
<dbReference type="HPA" id="ENSG00000100312">
    <property type="expression patterns" value="Tissue enriched (testis)"/>
</dbReference>
<dbReference type="MalaCards" id="ACR"/>
<dbReference type="MIM" id="102480">
    <property type="type" value="gene"/>
</dbReference>
<dbReference type="MIM" id="620500">
    <property type="type" value="phenotype"/>
</dbReference>
<dbReference type="neXtProt" id="NX_P10323"/>
<dbReference type="OpenTargets" id="ENSG00000100312"/>
<dbReference type="PharmGKB" id="PA24451"/>
<dbReference type="VEuPathDB" id="HostDB:ENSG00000100312"/>
<dbReference type="eggNOG" id="KOG3627">
    <property type="taxonomic scope" value="Eukaryota"/>
</dbReference>
<dbReference type="GeneTree" id="ENSGT00940000162430"/>
<dbReference type="InParanoid" id="P10323"/>
<dbReference type="OMA" id="LMCRDNV"/>
<dbReference type="OrthoDB" id="6339452at2759"/>
<dbReference type="PAN-GO" id="P10323">
    <property type="GO annotations" value="2 GO annotations based on evolutionary models"/>
</dbReference>
<dbReference type="PhylomeDB" id="P10323"/>
<dbReference type="TreeFam" id="TF335943"/>
<dbReference type="BRENDA" id="3.4.21.10">
    <property type="organism ID" value="2681"/>
</dbReference>
<dbReference type="PathwayCommons" id="P10323"/>
<dbReference type="Reactome" id="R-HSA-1300645">
    <property type="pathway name" value="Acrosome Reaction and Sperm:Oocyte Membrane Binding"/>
</dbReference>
<dbReference type="SignaLink" id="P10323"/>
<dbReference type="BioGRID-ORCS" id="49">
    <property type="hits" value="31 hits in 1152 CRISPR screens"/>
</dbReference>
<dbReference type="GeneWiki" id="Acrosin"/>
<dbReference type="GenomeRNAi" id="49"/>
<dbReference type="Pharos" id="P10323">
    <property type="development level" value="Tchem"/>
</dbReference>
<dbReference type="PRO" id="PR:P10323"/>
<dbReference type="Proteomes" id="UP000005640">
    <property type="component" value="Chromosome 22"/>
</dbReference>
<dbReference type="RNAct" id="P10323">
    <property type="molecule type" value="protein"/>
</dbReference>
<dbReference type="Bgee" id="ENSG00000100312">
    <property type="expression patterns" value="Expressed in left testis and 85 other cell types or tissues"/>
</dbReference>
<dbReference type="ExpressionAtlas" id="P10323">
    <property type="expression patterns" value="baseline and differential"/>
</dbReference>
<dbReference type="GO" id="GO:0043159">
    <property type="term" value="C:acrosomal matrix"/>
    <property type="evidence" value="ECO:0000304"/>
    <property type="project" value="HGNC-UCL"/>
</dbReference>
<dbReference type="GO" id="GO:0005576">
    <property type="term" value="C:extracellular region"/>
    <property type="evidence" value="ECO:0000304"/>
    <property type="project" value="Reactome"/>
</dbReference>
<dbReference type="GO" id="GO:0005798">
    <property type="term" value="C:Golgi-associated vesicle"/>
    <property type="evidence" value="ECO:0007669"/>
    <property type="project" value="Ensembl"/>
</dbReference>
<dbReference type="GO" id="GO:0005634">
    <property type="term" value="C:nucleus"/>
    <property type="evidence" value="ECO:0007005"/>
    <property type="project" value="UniProtKB"/>
</dbReference>
<dbReference type="GO" id="GO:0032991">
    <property type="term" value="C:protein-containing complex"/>
    <property type="evidence" value="ECO:0000314"/>
    <property type="project" value="UniProtKB"/>
</dbReference>
<dbReference type="GO" id="GO:0004040">
    <property type="term" value="F:amidase activity"/>
    <property type="evidence" value="ECO:0000250"/>
    <property type="project" value="UniProtKB"/>
</dbReference>
<dbReference type="GO" id="GO:0005507">
    <property type="term" value="F:copper ion binding"/>
    <property type="evidence" value="ECO:0000303"/>
    <property type="project" value="UniProtKB"/>
</dbReference>
<dbReference type="GO" id="GO:0005537">
    <property type="term" value="F:D-mannose binding"/>
    <property type="evidence" value="ECO:0000314"/>
    <property type="project" value="UniProtKB"/>
</dbReference>
<dbReference type="GO" id="GO:0003677">
    <property type="term" value="F:DNA binding"/>
    <property type="evidence" value="ECO:0000303"/>
    <property type="project" value="UniProtKB"/>
</dbReference>
<dbReference type="GO" id="GO:0042806">
    <property type="term" value="F:fucose binding"/>
    <property type="evidence" value="ECO:0000250"/>
    <property type="project" value="UniProtKB"/>
</dbReference>
<dbReference type="GO" id="GO:0002020">
    <property type="term" value="F:protease binding"/>
    <property type="evidence" value="ECO:0000304"/>
    <property type="project" value="Reactome"/>
</dbReference>
<dbReference type="GO" id="GO:0004252">
    <property type="term" value="F:serine-type endopeptidase activity"/>
    <property type="evidence" value="ECO:0000314"/>
    <property type="project" value="UniProtKB"/>
</dbReference>
<dbReference type="GO" id="GO:0008236">
    <property type="term" value="F:serine-type peptidase activity"/>
    <property type="evidence" value="ECO:0000250"/>
    <property type="project" value="UniProtKB"/>
</dbReference>
<dbReference type="GO" id="GO:0008270">
    <property type="term" value="F:zinc ion binding"/>
    <property type="evidence" value="ECO:0000303"/>
    <property type="project" value="UniProtKB"/>
</dbReference>
<dbReference type="GO" id="GO:0002077">
    <property type="term" value="P:acrosome matrix dispersal"/>
    <property type="evidence" value="ECO:0000303"/>
    <property type="project" value="UniProtKB"/>
</dbReference>
<dbReference type="GO" id="GO:0007340">
    <property type="term" value="P:acrosome reaction"/>
    <property type="evidence" value="ECO:0000315"/>
    <property type="project" value="UniProtKB"/>
</dbReference>
<dbReference type="GO" id="GO:0007190">
    <property type="term" value="P:activation of adenylate cyclase activity"/>
    <property type="evidence" value="ECO:0000314"/>
    <property type="project" value="UniProtKB"/>
</dbReference>
<dbReference type="GO" id="GO:0007339">
    <property type="term" value="P:binding of sperm to zona pellucida"/>
    <property type="evidence" value="ECO:0007669"/>
    <property type="project" value="Ensembl"/>
</dbReference>
<dbReference type="GO" id="GO:0007341">
    <property type="term" value="P:penetration of zona pellucida"/>
    <property type="evidence" value="ECO:0007669"/>
    <property type="project" value="Ensembl"/>
</dbReference>
<dbReference type="GO" id="GO:0048545">
    <property type="term" value="P:response to steroid hormone"/>
    <property type="evidence" value="ECO:0007669"/>
    <property type="project" value="Ensembl"/>
</dbReference>
<dbReference type="GO" id="GO:0007338">
    <property type="term" value="P:single fertilization"/>
    <property type="evidence" value="ECO:0000250"/>
    <property type="project" value="UniProtKB"/>
</dbReference>
<dbReference type="CDD" id="cd00190">
    <property type="entry name" value="Tryp_SPc"/>
    <property type="match status" value="1"/>
</dbReference>
<dbReference type="FunFam" id="2.40.10.10:FF:000003">
    <property type="entry name" value="Transmembrane serine protease 3"/>
    <property type="match status" value="1"/>
</dbReference>
<dbReference type="Gene3D" id="2.40.10.10">
    <property type="entry name" value="Trypsin-like serine proteases"/>
    <property type="match status" value="2"/>
</dbReference>
<dbReference type="InterPro" id="IPR012267">
    <property type="entry name" value="Pept_S1A_acrosin"/>
</dbReference>
<dbReference type="InterPro" id="IPR009003">
    <property type="entry name" value="Peptidase_S1_PA"/>
</dbReference>
<dbReference type="InterPro" id="IPR043504">
    <property type="entry name" value="Peptidase_S1_PA_chymotrypsin"/>
</dbReference>
<dbReference type="InterPro" id="IPR001314">
    <property type="entry name" value="Peptidase_S1A"/>
</dbReference>
<dbReference type="InterPro" id="IPR001254">
    <property type="entry name" value="Trypsin_dom"/>
</dbReference>
<dbReference type="InterPro" id="IPR018114">
    <property type="entry name" value="TRYPSIN_HIS"/>
</dbReference>
<dbReference type="InterPro" id="IPR033116">
    <property type="entry name" value="TRYPSIN_SER"/>
</dbReference>
<dbReference type="PANTHER" id="PTHR24252:SF8">
    <property type="entry name" value="ACROSIN"/>
    <property type="match status" value="1"/>
</dbReference>
<dbReference type="PANTHER" id="PTHR24252">
    <property type="entry name" value="ACROSIN-RELATED"/>
    <property type="match status" value="1"/>
</dbReference>
<dbReference type="Pfam" id="PF00089">
    <property type="entry name" value="Trypsin"/>
    <property type="match status" value="1"/>
</dbReference>
<dbReference type="PIRSF" id="PIRSF001141">
    <property type="entry name" value="Acrosin"/>
    <property type="match status" value="1"/>
</dbReference>
<dbReference type="PRINTS" id="PR00722">
    <property type="entry name" value="CHYMOTRYPSIN"/>
</dbReference>
<dbReference type="SMART" id="SM00020">
    <property type="entry name" value="Tryp_SPc"/>
    <property type="match status" value="1"/>
</dbReference>
<dbReference type="SUPFAM" id="SSF50494">
    <property type="entry name" value="Trypsin-like serine proteases"/>
    <property type="match status" value="1"/>
</dbReference>
<dbReference type="PROSITE" id="PS50240">
    <property type="entry name" value="TRYPSIN_DOM"/>
    <property type="match status" value="1"/>
</dbReference>
<dbReference type="PROSITE" id="PS00134">
    <property type="entry name" value="TRYPSIN_HIS"/>
    <property type="match status" value="1"/>
</dbReference>
<dbReference type="PROSITE" id="PS00135">
    <property type="entry name" value="TRYPSIN_SER"/>
    <property type="match status" value="1"/>
</dbReference>
<name>ACRO_HUMAN</name>
<sequence>MVEMLPTAILLVLAVSVVAKDNATCDGPCGLRFRQNPQGGVRIVGGKAAQHGAWPWMVSLQIFTYNSHRYHTCGGSLLNSRWVLTAAHCFVGKNNVHDWRLVFGAKEITYGNNKPVKAPLQERYVEKIIIHEKYNSATEGNDIALVEITPPISCGRFIGPGCLPHFKAGLPRGSQSCWVAGWGYIEEKAPRPSSILMEARVDLIDLDLCNSTQWYNGRVQPTNVCAGYPVGKIDTCQGDSGGPLMCKDSKESAYVVVGITSWGVGCARAKRPGIYTATWPYLNWIASKIGSNALRMIQSATPPPPTTRPPPIRPPFSHPISAHLPWYFQPPPRPLPPRPPAAQPRPPPSPPPPPPPPASPLPPPPPPPPPTPSSTTKLPQGLSFAKRLQQLIEVLKGKTYSDGKNHYDMETTELPELTSTS</sequence>
<feature type="signal peptide">
    <location>
        <begin position="1"/>
        <end position="19"/>
    </location>
</feature>
<feature type="chain" id="PRO_0000027518" description="Acrosin">
    <location>
        <begin position="20"/>
        <end position="421"/>
    </location>
</feature>
<feature type="chain" id="PRO_0000027519" description="Acrosin light chain">
    <location>
        <begin position="20"/>
        <end position="42"/>
    </location>
</feature>
<feature type="chain" id="PRO_0000027520" description="Acrosin heavy chain">
    <location>
        <begin position="43"/>
        <end position="343"/>
    </location>
</feature>
<feature type="propeptide" id="PRO_0000027521" description="Pro-rich" evidence="6">
    <location>
        <begin position="344"/>
        <end position="421"/>
    </location>
</feature>
<feature type="domain" description="Peptidase S1" evidence="2">
    <location>
        <begin position="43"/>
        <end position="290"/>
    </location>
</feature>
<feature type="region of interest" description="Disordered" evidence="3">
    <location>
        <begin position="297"/>
        <end position="316"/>
    </location>
</feature>
<feature type="region of interest" description="Disordered" evidence="3">
    <location>
        <begin position="327"/>
        <end position="383"/>
    </location>
</feature>
<feature type="region of interest" description="Disordered" evidence="3">
    <location>
        <begin position="397"/>
        <end position="421"/>
    </location>
</feature>
<feature type="compositionally biased region" description="Pro residues" evidence="3">
    <location>
        <begin position="301"/>
        <end position="316"/>
    </location>
</feature>
<feature type="compositionally biased region" description="Pro residues" evidence="3">
    <location>
        <begin position="328"/>
        <end position="372"/>
    </location>
</feature>
<feature type="compositionally biased region" description="Basic and acidic residues" evidence="3">
    <location>
        <begin position="397"/>
        <end position="409"/>
    </location>
</feature>
<feature type="compositionally biased region" description="Low complexity" evidence="3">
    <location>
        <begin position="412"/>
        <end position="421"/>
    </location>
</feature>
<feature type="active site" description="Charge relay system" evidence="1">
    <location>
        <position position="88"/>
    </location>
</feature>
<feature type="active site" description="Charge relay system" evidence="1">
    <location>
        <position position="142"/>
    </location>
</feature>
<feature type="active site" description="Charge relay system" evidence="1">
    <location>
        <position position="240"/>
    </location>
</feature>
<feature type="glycosylation site" description="N-linked (GlcNAc...) asparagine" evidence="1">
    <location>
        <position position="22"/>
    </location>
</feature>
<feature type="glycosylation site" description="N-linked (GlcNAc...) asparagine" evidence="1">
    <location>
        <position position="210"/>
    </location>
</feature>
<feature type="disulfide bond" description="Interchain (between light and heavy chains)" evidence="2">
    <location>
        <begin position="25"/>
        <end position="154"/>
    </location>
</feature>
<feature type="disulfide bond" description="Interchain (between light and heavy chains)" evidence="2">
    <location>
        <begin position="29"/>
        <end position="162"/>
    </location>
</feature>
<feature type="disulfide bond" evidence="2">
    <location>
        <begin position="73"/>
        <end position="89"/>
    </location>
</feature>
<feature type="disulfide bond" evidence="2">
    <location>
        <begin position="177"/>
        <end position="246"/>
    </location>
</feature>
<feature type="disulfide bond" evidence="2">
    <location>
        <begin position="209"/>
        <end position="225"/>
    </location>
</feature>
<feature type="disulfide bond" evidence="2">
    <location>
        <begin position="236"/>
        <end position="266"/>
    </location>
</feature>
<feature type="sequence variant" id="VAR_088987" description="In SPGF87; likely pathogenic; loss of protein expression in patient sperm." evidence="4">
    <location>
        <begin position="56"/>
        <end position="421"/>
    </location>
</feature>
<feature type="sequence variant" id="VAR_011650" description="In dbSNP:rs1064734.">
    <original>L</original>
    <variation>V</variation>
    <location>
        <position position="120"/>
    </location>
</feature>
<feature type="sequence variant" id="VAR_011651" description="In dbSNP:rs1064735.">
    <original>F</original>
    <variation>L</variation>
    <location>
        <position position="166"/>
    </location>
</feature>
<feature type="sequence conflict" description="In Ref. 2 and 4." evidence="6" ref="2 4">
    <original>T</original>
    <variation>R</variation>
    <location>
        <position position="64"/>
    </location>
</feature>
<feature type="sequence conflict" description="In Ref. 3." evidence="6" ref="3">
    <original>A</original>
    <variation>V</variation>
    <location>
        <position position="226"/>
    </location>
</feature>
<feature type="sequence conflict" description="In Ref. 2 and 4." evidence="6" ref="2 4">
    <original>R</original>
    <variation>L</variation>
    <location>
        <position position="268"/>
    </location>
</feature>
<feature type="sequence conflict" description="In Ref. 6; CAG30252." evidence="6" ref="6">
    <original>M</original>
    <variation>V</variation>
    <location>
        <position position="296"/>
    </location>
</feature>
<feature type="sequence conflict" description="In Ref. 2, 3 and 4." evidence="6" ref="2 3 4">
    <original>R</original>
    <variation>P</variation>
    <location>
        <position position="345"/>
    </location>
</feature>
<comment type="function">
    <text evidence="4">Acrosin is the major protease of mammalian spermatozoa. It is a serine protease of trypsin-like cleavage specificity, it is synthesized in a zymogen form, proacrosin and stored in the acrosome.</text>
</comment>
<comment type="catalytic activity">
    <reaction>
        <text>Preferential cleavage: Arg-|-Xaa, Lys-|-Xaa.</text>
        <dbReference type="EC" id="3.4.21.10"/>
    </reaction>
</comment>
<comment type="activity regulation">
    <text evidence="5">Inhibited by SERPINA5.</text>
</comment>
<comment type="subunit">
    <text>Heavy chain (catalytic) and a light chain linked by two disulfide bonds. Forms a heterodimer with SERPINA5.</text>
</comment>
<comment type="interaction">
    <interactant intactId="EBI-21280149">
        <id>P10323</id>
    </interactant>
    <interactant intactId="EBI-1755919">
        <id>Q05996</id>
        <label>ZP2</label>
    </interactant>
    <organismsDiffer>false</organismsDiffer>
    <experiments>4</experiments>
</comment>
<comment type="interaction">
    <interactant intactId="EBI-21280149">
        <id>P10323</id>
    </interactant>
    <interactant intactId="EBI-11783624">
        <id>P21754</id>
        <label>ZP3</label>
    </interactant>
    <organismsDiffer>false</organismsDiffer>
    <experiments>2</experiments>
</comment>
<comment type="interaction">
    <interactant intactId="EBI-21280149">
        <id>P10323</id>
    </interactant>
    <interactant intactId="EBI-11783805">
        <id>Q12836</id>
        <label>ZP4</label>
    </interactant>
    <organismsDiffer>false</organismsDiffer>
    <experiments>2</experiments>
</comment>
<comment type="disease" evidence="4">
    <disease id="DI-06756">
        <name>Spermatogenic failure 87</name>
        <acronym>SPGF87</acronym>
        <description>An autosomal recessive male infertility disorder characterized by inability of mutant sperm to penetrate the zona pellucida, resulting in fertilization failure.</description>
        <dbReference type="MIM" id="620500"/>
    </disease>
    <text>The disease may be caused by variants affecting the gene represented in this entry.</text>
</comment>
<comment type="similarity">
    <text evidence="2">Belongs to the peptidase S1 family.</text>
</comment>
<gene>
    <name type="primary">ACR</name>
    <name type="synonym">ACRS</name>
</gene>
<reference key="1">
    <citation type="journal article" date="1989" name="FEBS Lett.">
        <title>Primary structure of human proacrosin deduced from its cDNA sequence.</title>
        <authorList>
            <person name="Baba T."/>
            <person name="Watanabe K."/>
            <person name="Kashiwabara S."/>
            <person name="Arai Y."/>
        </authorList>
    </citation>
    <scope>NUCLEOTIDE SEQUENCE [MRNA]</scope>
    <source>
        <tissue>Testis</tissue>
    </source>
</reference>
<reference key="2">
    <citation type="journal article" date="1990" name="Eur. J. Biochem.">
        <title>Nucleotide sequence and exon-intron organization of the human proacrosin gene.</title>
        <authorList>
            <person name="Keime S."/>
            <person name="Adham I.M."/>
            <person name="Engel W."/>
        </authorList>
    </citation>
    <scope>NUCLEOTIDE SEQUENCE [GENOMIC DNA]</scope>
    <source>
        <tissue>Leukocyte</tissue>
    </source>
</reference>
<reference key="3">
    <citation type="journal article" date="1990" name="Hum. Genet.">
        <title>Molecular cloning of human preproacrosin cDNA.</title>
        <authorList>
            <person name="Adham I.M."/>
            <person name="Klemm U."/>
            <person name="Maier W.-M."/>
            <person name="Engel W."/>
        </authorList>
    </citation>
    <scope>NUCLEOTIDE SEQUENCE [MRNA]</scope>
</reference>
<reference key="4">
    <citation type="journal article" date="1992" name="Eur. J. Biochem.">
        <title>Molecular cloning, sequencing and restriction mapping of the genomic sequence encoding human proacrosin.</title>
        <authorList>
            <person name="Vazquez-Levin M.H."/>
            <person name="Reventos J."/>
            <person name="Gordon J.W."/>
        </authorList>
    </citation>
    <scope>NUCLEOTIDE SEQUENCE [GENOMIC DNA]</scope>
</reference>
<reference key="5">
    <citation type="journal article" date="1992" name="Eur. J. Biochem.">
        <authorList>
            <person name="Adham I.M."/>
            <person name="Spitzer U."/>
            <person name="Schloesser M."/>
            <person name="Kremling H."/>
            <person name="Keime S."/>
            <person name="Engel W."/>
        </authorList>
    </citation>
    <scope>ERRATUM OF PUBMED:1628652</scope>
    <scope>DISCUSSION OF PUBMED:1628652</scope>
</reference>
<reference key="6">
    <citation type="journal article" date="2004" name="Genome Biol.">
        <title>A genome annotation-driven approach to cloning the human ORFeome.</title>
        <authorList>
            <person name="Collins J.E."/>
            <person name="Wright C.L."/>
            <person name="Edwards C.A."/>
            <person name="Davis M.P."/>
            <person name="Grinham J.A."/>
            <person name="Cole C.G."/>
            <person name="Goward M.E."/>
            <person name="Aguado B."/>
            <person name="Mallya M."/>
            <person name="Mokrab Y."/>
            <person name="Huckle E.J."/>
            <person name="Beare D.M."/>
            <person name="Dunham I."/>
        </authorList>
    </citation>
    <scope>NUCLEOTIDE SEQUENCE [LARGE SCALE MRNA]</scope>
</reference>
<reference key="7">
    <citation type="journal article" date="1994" name="Am. J. Physiol.">
        <title>Inhibition of acrosin by protein C inhibitor and localization of protein C inhibitor to spermatozoa.</title>
        <authorList>
            <person name="Zheng X."/>
            <person name="Geiger M."/>
            <person name="Ecke S."/>
            <person name="Bielek E."/>
            <person name="Donner P."/>
            <person name="Eberspacher U."/>
            <person name="Schleuning W.D."/>
            <person name="Binder B.R."/>
        </authorList>
    </citation>
    <scope>ACTIVITY REGULATION</scope>
    <scope>HETERODIMER WITH SERPINA5</scope>
</reference>
<reference key="8">
    <citation type="journal article" date="2002" name="J. Reprod. Immunol.">
        <title>Evaluation of the proacrosin/acrosin system and its mechanism of activation in human sperm extracts.</title>
        <authorList>
            <person name="Zahn A."/>
            <person name="Furlong L.I."/>
            <person name="Biancotti J.C."/>
            <person name="Ghiringhelli P.D."/>
            <person name="Marijn-Briggiler C.I."/>
            <person name="Vazquez-Levin M.H."/>
        </authorList>
    </citation>
    <scope>PROPEPTIDE</scope>
    <scope>ACTIVATION</scope>
</reference>
<reference key="9">
    <citation type="journal article" date="2023" name="Hum. Reprod.">
        <title>ACROSIN deficiency causes total fertilization failure in humans by preventing the sperm from penetrating the zona pellucida.</title>
        <authorList>
            <person name="Hua R."/>
            <person name="Xue R."/>
            <person name="Liu Y."/>
            <person name="Li Y."/>
            <person name="Sha X."/>
            <person name="Li K."/>
            <person name="Gao Y."/>
            <person name="Shen Q."/>
            <person name="Lv M."/>
            <person name="Xu Y."/>
            <person name="Zhang Z."/>
            <person name="He X."/>
            <person name="Cao Y."/>
            <person name="Wu H."/>
        </authorList>
    </citation>
    <scope>INVOLVEMENT IN SPGF87</scope>
    <scope>VARIANT SPGF87 56-TRP--SER-421 DEL</scope>
    <scope>CHARACTERIZATION OF VARIANT SPGF87 56-TRP--SER-421 DEL</scope>
    <scope>FUNCTION</scope>
</reference>
<accession>P10323</accession>
<accession>Q6ICK2</accession>
<keyword id="KW-0225">Disease variant</keyword>
<keyword id="KW-1015">Disulfide bond</keyword>
<keyword id="KW-0325">Glycoprotein</keyword>
<keyword id="KW-0378">Hydrolase</keyword>
<keyword id="KW-0645">Protease</keyword>
<keyword id="KW-1267">Proteomics identification</keyword>
<keyword id="KW-1185">Reference proteome</keyword>
<keyword id="KW-0720">Serine protease</keyword>
<keyword id="KW-0732">Signal</keyword>
<keyword id="KW-0865">Zymogen</keyword>
<protein>
    <recommendedName>
        <fullName>Acrosin</fullName>
        <ecNumber>3.4.21.10</ecNumber>
    </recommendedName>
    <component>
        <recommendedName>
            <fullName>Acrosin light chain</fullName>
        </recommendedName>
    </component>
    <component>
        <recommendedName>
            <fullName>Acrosin heavy chain</fullName>
        </recommendedName>
    </component>
</protein>
<organism>
    <name type="scientific">Homo sapiens</name>
    <name type="common">Human</name>
    <dbReference type="NCBI Taxonomy" id="9606"/>
    <lineage>
        <taxon>Eukaryota</taxon>
        <taxon>Metazoa</taxon>
        <taxon>Chordata</taxon>
        <taxon>Craniata</taxon>
        <taxon>Vertebrata</taxon>
        <taxon>Euteleostomi</taxon>
        <taxon>Mammalia</taxon>
        <taxon>Eutheria</taxon>
        <taxon>Euarchontoglires</taxon>
        <taxon>Primates</taxon>
        <taxon>Haplorrhini</taxon>
        <taxon>Catarrhini</taxon>
        <taxon>Hominidae</taxon>
        <taxon>Homo</taxon>
    </lineage>
</organism>